<organism>
    <name type="scientific">Yersinia pestis bv. Antiqua (strain Antiqua)</name>
    <dbReference type="NCBI Taxonomy" id="360102"/>
    <lineage>
        <taxon>Bacteria</taxon>
        <taxon>Pseudomonadati</taxon>
        <taxon>Pseudomonadota</taxon>
        <taxon>Gammaproteobacteria</taxon>
        <taxon>Enterobacterales</taxon>
        <taxon>Yersiniaceae</taxon>
        <taxon>Yersinia</taxon>
    </lineage>
</organism>
<accession>Q1C0N0</accession>
<proteinExistence type="inferred from homology"/>
<comment type="function">
    <text evidence="1">Catalyzes the conversion of acetate into acetyl-CoA (AcCoA), an essential intermediate at the junction of anabolic and catabolic pathways. Acs undergoes a two-step reaction. In the first half reaction, Acs combines acetate with ATP to form acetyl-adenylate (AcAMP) intermediate. In the second half reaction, it can then transfer the acetyl group from AcAMP to the sulfhydryl group of CoA, forming the product AcCoA.</text>
</comment>
<comment type="function">
    <text evidence="1">Enables the cell to use acetate during aerobic growth to generate energy via the TCA cycle, and biosynthetic compounds via the glyoxylate shunt. Acetylates CheY, the response regulator involved in flagellar movement and chemotaxis.</text>
</comment>
<comment type="catalytic activity">
    <reaction evidence="1">
        <text>acetate + ATP + CoA = acetyl-CoA + AMP + diphosphate</text>
        <dbReference type="Rhea" id="RHEA:23176"/>
        <dbReference type="ChEBI" id="CHEBI:30089"/>
        <dbReference type="ChEBI" id="CHEBI:30616"/>
        <dbReference type="ChEBI" id="CHEBI:33019"/>
        <dbReference type="ChEBI" id="CHEBI:57287"/>
        <dbReference type="ChEBI" id="CHEBI:57288"/>
        <dbReference type="ChEBI" id="CHEBI:456215"/>
        <dbReference type="EC" id="6.2.1.1"/>
    </reaction>
</comment>
<comment type="cofactor">
    <cofactor evidence="1">
        <name>Mg(2+)</name>
        <dbReference type="ChEBI" id="CHEBI:18420"/>
    </cofactor>
</comment>
<comment type="PTM">
    <text evidence="1">Acetylated. Deacetylation by the SIR2-homolog deacetylase activates the enzyme.</text>
</comment>
<comment type="similarity">
    <text evidence="1">Belongs to the ATP-dependent AMP-binding enzyme family.</text>
</comment>
<keyword id="KW-0007">Acetylation</keyword>
<keyword id="KW-0067">ATP-binding</keyword>
<keyword id="KW-0436">Ligase</keyword>
<keyword id="KW-0460">Magnesium</keyword>
<keyword id="KW-0479">Metal-binding</keyword>
<keyword id="KW-0547">Nucleotide-binding</keyword>
<dbReference type="EC" id="6.2.1.1" evidence="1"/>
<dbReference type="EMBL" id="CP000308">
    <property type="protein sequence ID" value="ABG15992.1"/>
    <property type="molecule type" value="Genomic_DNA"/>
</dbReference>
<dbReference type="RefSeq" id="WP_002209031.1">
    <property type="nucleotide sequence ID" value="NZ_CP009906.1"/>
</dbReference>
<dbReference type="SMR" id="Q1C0N0"/>
<dbReference type="GeneID" id="57974350"/>
<dbReference type="KEGG" id="ypa:YPA_4031"/>
<dbReference type="Proteomes" id="UP000001971">
    <property type="component" value="Chromosome"/>
</dbReference>
<dbReference type="GO" id="GO:0005829">
    <property type="term" value="C:cytosol"/>
    <property type="evidence" value="ECO:0007669"/>
    <property type="project" value="TreeGrafter"/>
</dbReference>
<dbReference type="GO" id="GO:0003987">
    <property type="term" value="F:acetate-CoA ligase activity"/>
    <property type="evidence" value="ECO:0007669"/>
    <property type="project" value="UniProtKB-UniRule"/>
</dbReference>
<dbReference type="GO" id="GO:0016208">
    <property type="term" value="F:AMP binding"/>
    <property type="evidence" value="ECO:0007669"/>
    <property type="project" value="InterPro"/>
</dbReference>
<dbReference type="GO" id="GO:0005524">
    <property type="term" value="F:ATP binding"/>
    <property type="evidence" value="ECO:0007669"/>
    <property type="project" value="UniProtKB-KW"/>
</dbReference>
<dbReference type="GO" id="GO:0046872">
    <property type="term" value="F:metal ion binding"/>
    <property type="evidence" value="ECO:0007669"/>
    <property type="project" value="UniProtKB-KW"/>
</dbReference>
<dbReference type="GO" id="GO:0019427">
    <property type="term" value="P:acetyl-CoA biosynthetic process from acetate"/>
    <property type="evidence" value="ECO:0007669"/>
    <property type="project" value="UniProtKB-UniRule"/>
</dbReference>
<dbReference type="GO" id="GO:0006935">
    <property type="term" value="P:chemotaxis"/>
    <property type="evidence" value="ECO:0007669"/>
    <property type="project" value="UniProtKB-UniRule"/>
</dbReference>
<dbReference type="CDD" id="cd05966">
    <property type="entry name" value="ACS"/>
    <property type="match status" value="1"/>
</dbReference>
<dbReference type="FunFam" id="3.30.300.30:FF:000004">
    <property type="entry name" value="Acetyl-coenzyme A synthetase"/>
    <property type="match status" value="1"/>
</dbReference>
<dbReference type="FunFam" id="3.40.50.12780:FF:000001">
    <property type="entry name" value="Acetyl-coenzyme A synthetase"/>
    <property type="match status" value="1"/>
</dbReference>
<dbReference type="Gene3D" id="3.30.300.30">
    <property type="match status" value="1"/>
</dbReference>
<dbReference type="Gene3D" id="3.40.50.12780">
    <property type="entry name" value="N-terminal domain of ligase-like"/>
    <property type="match status" value="1"/>
</dbReference>
<dbReference type="HAMAP" id="MF_01123">
    <property type="entry name" value="Ac_CoA_synth"/>
    <property type="match status" value="1"/>
</dbReference>
<dbReference type="InterPro" id="IPR011904">
    <property type="entry name" value="Ac_CoA_lig"/>
</dbReference>
<dbReference type="InterPro" id="IPR032387">
    <property type="entry name" value="ACAS_N"/>
</dbReference>
<dbReference type="InterPro" id="IPR025110">
    <property type="entry name" value="AMP-bd_C"/>
</dbReference>
<dbReference type="InterPro" id="IPR045851">
    <property type="entry name" value="AMP-bd_C_sf"/>
</dbReference>
<dbReference type="InterPro" id="IPR020845">
    <property type="entry name" value="AMP-binding_CS"/>
</dbReference>
<dbReference type="InterPro" id="IPR000873">
    <property type="entry name" value="AMP-dep_synth/lig_dom"/>
</dbReference>
<dbReference type="InterPro" id="IPR042099">
    <property type="entry name" value="ANL_N_sf"/>
</dbReference>
<dbReference type="NCBIfam" id="TIGR02188">
    <property type="entry name" value="Ac_CoA_lig_AcsA"/>
    <property type="match status" value="1"/>
</dbReference>
<dbReference type="NCBIfam" id="NF001208">
    <property type="entry name" value="PRK00174.1"/>
    <property type="match status" value="1"/>
</dbReference>
<dbReference type="PANTHER" id="PTHR24095">
    <property type="entry name" value="ACETYL-COENZYME A SYNTHETASE"/>
    <property type="match status" value="1"/>
</dbReference>
<dbReference type="PANTHER" id="PTHR24095:SF243">
    <property type="entry name" value="ACETYL-COENZYME A SYNTHETASE"/>
    <property type="match status" value="1"/>
</dbReference>
<dbReference type="Pfam" id="PF16177">
    <property type="entry name" value="ACAS_N"/>
    <property type="match status" value="1"/>
</dbReference>
<dbReference type="Pfam" id="PF00501">
    <property type="entry name" value="AMP-binding"/>
    <property type="match status" value="1"/>
</dbReference>
<dbReference type="Pfam" id="PF13193">
    <property type="entry name" value="AMP-binding_C"/>
    <property type="match status" value="1"/>
</dbReference>
<dbReference type="SUPFAM" id="SSF56801">
    <property type="entry name" value="Acetyl-CoA synthetase-like"/>
    <property type="match status" value="1"/>
</dbReference>
<dbReference type="PROSITE" id="PS00455">
    <property type="entry name" value="AMP_BINDING"/>
    <property type="match status" value="1"/>
</dbReference>
<name>ACSA_YERPA</name>
<evidence type="ECO:0000255" key="1">
    <source>
        <dbReference type="HAMAP-Rule" id="MF_01123"/>
    </source>
</evidence>
<reference key="1">
    <citation type="journal article" date="2006" name="J. Bacteriol.">
        <title>Complete genome sequence of Yersinia pestis strains Antiqua and Nepal516: evidence of gene reduction in an emerging pathogen.</title>
        <authorList>
            <person name="Chain P.S.G."/>
            <person name="Hu P."/>
            <person name="Malfatti S.A."/>
            <person name="Radnedge L."/>
            <person name="Larimer F."/>
            <person name="Vergez L.M."/>
            <person name="Worsham P."/>
            <person name="Chu M.C."/>
            <person name="Andersen G.L."/>
        </authorList>
    </citation>
    <scope>NUCLEOTIDE SEQUENCE [LARGE SCALE GENOMIC DNA]</scope>
    <source>
        <strain>Antiqua</strain>
    </source>
</reference>
<sequence>MSQIHKHPIPAAIAEHALITPEKYQHYYQQSVQNPDEFWGEQGKIIDWIKPYKTVKNTSFDPGHVSIRWFEDGTLNLAANCLDRHLAERGDQTAIIWEGDDPNQSKTVTYKQLHHDVCQFANVLKSLGVKKGDVVAIYMPMVPEAAVAMLACARIGAVHSVIFGGFSPDAVAGRIIDSHSKLVITADEGIRAGRAIPLKKNVDEALKNPAITSIKNVVVFQRTGNASYWEDGRDVWWHDLIKEASADCPPEEMNAEDPLFILYTSGSTGKPKGVVHTTGGYLVYAALTFKYVFDYHPGDIYWCTADVGWVTGHSYLLYGPLACGAITLMFEGVPNYPGVNRLSQVVDKHKVNILYTAPTAIRALMAEGDKAIEGTKRDSLRIMGSVGEPINPEAWEWYYNKIGNSKCPIVDTWWQTETGGFMITPLPGATELKAGSATRPFFGVQPALVDNLGNPQEGVAEGNLVITDSWPGQARTLFGDHERFEQTYFSTFKGMYFSGDGARRDEDGYYWITGRVDDVLNVSGHRLGTAEIESALVAHPKIAEAAVVGVPHNIKGQAIYAYITLNHGEEPTPELYTEVRNWVRKEIGPLATPDILHWTDSLPKTRSGKIMRRILRKIATGDTSNLGDTSTLADPSVVEKLLEEKQSMQTPS</sequence>
<protein>
    <recommendedName>
        <fullName evidence="1">Acetyl-coenzyme A synthetase</fullName>
        <shortName evidence="1">AcCoA synthetase</shortName>
        <shortName evidence="1">Acs</shortName>
        <ecNumber evidence="1">6.2.1.1</ecNumber>
    </recommendedName>
    <alternativeName>
        <fullName evidence="1">Acetate--CoA ligase</fullName>
    </alternativeName>
    <alternativeName>
        <fullName evidence="1">Acyl-activating enzyme</fullName>
    </alternativeName>
</protein>
<feature type="chain" id="PRO_1000065334" description="Acetyl-coenzyme A synthetase">
    <location>
        <begin position="1"/>
        <end position="652"/>
    </location>
</feature>
<feature type="binding site" evidence="1">
    <location>
        <begin position="191"/>
        <end position="194"/>
    </location>
    <ligand>
        <name>CoA</name>
        <dbReference type="ChEBI" id="CHEBI:57287"/>
    </ligand>
</feature>
<feature type="binding site" evidence="1">
    <location>
        <position position="311"/>
    </location>
    <ligand>
        <name>CoA</name>
        <dbReference type="ChEBI" id="CHEBI:57287"/>
    </ligand>
</feature>
<feature type="binding site" evidence="1">
    <location>
        <position position="335"/>
    </location>
    <ligand>
        <name>CoA</name>
        <dbReference type="ChEBI" id="CHEBI:57287"/>
    </ligand>
</feature>
<feature type="binding site" evidence="1">
    <location>
        <begin position="387"/>
        <end position="389"/>
    </location>
    <ligand>
        <name>ATP</name>
        <dbReference type="ChEBI" id="CHEBI:30616"/>
    </ligand>
</feature>
<feature type="binding site" evidence="1">
    <location>
        <begin position="411"/>
        <end position="416"/>
    </location>
    <ligand>
        <name>ATP</name>
        <dbReference type="ChEBI" id="CHEBI:30616"/>
    </ligand>
</feature>
<feature type="binding site" evidence="1">
    <location>
        <position position="500"/>
    </location>
    <ligand>
        <name>ATP</name>
        <dbReference type="ChEBI" id="CHEBI:30616"/>
    </ligand>
</feature>
<feature type="binding site" evidence="1">
    <location>
        <position position="515"/>
    </location>
    <ligand>
        <name>ATP</name>
        <dbReference type="ChEBI" id="CHEBI:30616"/>
    </ligand>
</feature>
<feature type="binding site" evidence="1">
    <location>
        <position position="523"/>
    </location>
    <ligand>
        <name>CoA</name>
        <dbReference type="ChEBI" id="CHEBI:57287"/>
    </ligand>
</feature>
<feature type="binding site" evidence="1">
    <location>
        <position position="526"/>
    </location>
    <ligand>
        <name>ATP</name>
        <dbReference type="ChEBI" id="CHEBI:30616"/>
    </ligand>
</feature>
<feature type="binding site" evidence="1">
    <location>
        <position position="537"/>
    </location>
    <ligand>
        <name>Mg(2+)</name>
        <dbReference type="ChEBI" id="CHEBI:18420"/>
    </ligand>
</feature>
<feature type="binding site" evidence="1">
    <location>
        <position position="539"/>
    </location>
    <ligand>
        <name>Mg(2+)</name>
        <dbReference type="ChEBI" id="CHEBI:18420"/>
    </ligand>
</feature>
<feature type="binding site" evidence="1">
    <location>
        <position position="542"/>
    </location>
    <ligand>
        <name>Mg(2+)</name>
        <dbReference type="ChEBI" id="CHEBI:18420"/>
    </ligand>
</feature>
<feature type="binding site" evidence="1">
    <location>
        <position position="584"/>
    </location>
    <ligand>
        <name>CoA</name>
        <dbReference type="ChEBI" id="CHEBI:57287"/>
    </ligand>
</feature>
<feature type="modified residue" description="N6-acetyllysine" evidence="1">
    <location>
        <position position="609"/>
    </location>
</feature>
<gene>
    <name evidence="1" type="primary">acs</name>
    <name type="ordered locus">YPA_4031</name>
</gene>